<keyword id="KW-0227">DNA damage</keyword>
<keyword id="KW-0234">DNA repair</keyword>
<keyword id="KW-0235">DNA replication</keyword>
<keyword id="KW-0436">Ligase</keyword>
<keyword id="KW-0460">Magnesium</keyword>
<keyword id="KW-0464">Manganese</keyword>
<keyword id="KW-0479">Metal-binding</keyword>
<keyword id="KW-0520">NAD</keyword>
<keyword id="KW-0862">Zinc</keyword>
<evidence type="ECO:0000255" key="1">
    <source>
        <dbReference type="HAMAP-Rule" id="MF_01588"/>
    </source>
</evidence>
<protein>
    <recommendedName>
        <fullName evidence="1">DNA ligase</fullName>
        <ecNumber evidence="1">6.5.1.2</ecNumber>
    </recommendedName>
    <alternativeName>
        <fullName evidence="1">Polydeoxyribonucleotide synthase [NAD(+)]</fullName>
    </alternativeName>
</protein>
<accession>Q112N5</accession>
<sequence>MAKLTLEVEQYTQNLREKLQEAGYSYYVLDQPIMEDAVYDHLLRELQELESQYPQLIVSDSPTQRVGEKPATKFVSVKHNIPLYSLENAFNIQELKSWQERWQRQTLLENQRLTLPLRGEVKIKNSIDESDNFSTVNSLAPVITGSNFDEIDLASVDYICELKIDGSALALTYENGLLVRGATRGDGIMGEDITQNVKTINSIPLKLKVDNPPLLVEVRGEAFLSINVFENINAEREKIGEIIFANPRNAAAGTLRQLDSKIVAKRRLDFFAYTLYLEENESNFLQFYTQSQCLELLKKLGFKVNPNGQVCSSLNEVEAYYQYWDKQRENLPYLTDGVVVKLNSLSLQEKLGFTQKYPRWAIALKYPAEEIPTIVQGVTVQVGRTGAITPVAELKPVQLAGTTVQRASLHNSDRLAELDLHIGDTVIVRKAGEIIPEVVRVLPELRPKKAQRFQMPTHCPECSQPLIKPRNEAVTRCINTSCPAILRGSLAHWASRAALDINGLGEKLVQQLVNSGLVKSVADLYNLTMEDLTSLERMGKKSANKLIEAMGTSKAQPWRRVLYGLGIRHVGTVNAELLTQKFPTVAQLSQAKATDIETVHGIGPEIAQYVEQWFRVPANQNLVERLKIAGVTMETKDSTSGMAKLTETVLAIQNLAARQNLVARQNLENLVERLKIAGVTMETKDSTSDVVEVQSGLLRGKTFVLTGTLPTMRRDEAKNLIQNAGGKVTSSVSSKTDFIVVGEDGGSKLEKAKKLGVKELSESELLEALAVTGI</sequence>
<dbReference type="EC" id="6.5.1.2" evidence="1"/>
<dbReference type="EMBL" id="CP000393">
    <property type="protein sequence ID" value="ABG51539.1"/>
    <property type="molecule type" value="Genomic_DNA"/>
</dbReference>
<dbReference type="RefSeq" id="WP_011611906.1">
    <property type="nucleotide sequence ID" value="NC_008312.1"/>
</dbReference>
<dbReference type="SMR" id="Q112N5"/>
<dbReference type="STRING" id="203124.Tery_2316"/>
<dbReference type="KEGG" id="ter:Tery_2316"/>
<dbReference type="eggNOG" id="COG0272">
    <property type="taxonomic scope" value="Bacteria"/>
</dbReference>
<dbReference type="HOGENOM" id="CLU_007764_2_1_3"/>
<dbReference type="OrthoDB" id="9759736at2"/>
<dbReference type="GO" id="GO:0003677">
    <property type="term" value="F:DNA binding"/>
    <property type="evidence" value="ECO:0007669"/>
    <property type="project" value="InterPro"/>
</dbReference>
<dbReference type="GO" id="GO:0003911">
    <property type="term" value="F:DNA ligase (NAD+) activity"/>
    <property type="evidence" value="ECO:0007669"/>
    <property type="project" value="UniProtKB-UniRule"/>
</dbReference>
<dbReference type="GO" id="GO:0046872">
    <property type="term" value="F:metal ion binding"/>
    <property type="evidence" value="ECO:0007669"/>
    <property type="project" value="UniProtKB-KW"/>
</dbReference>
<dbReference type="GO" id="GO:0006281">
    <property type="term" value="P:DNA repair"/>
    <property type="evidence" value="ECO:0007669"/>
    <property type="project" value="UniProtKB-KW"/>
</dbReference>
<dbReference type="GO" id="GO:0006260">
    <property type="term" value="P:DNA replication"/>
    <property type="evidence" value="ECO:0007669"/>
    <property type="project" value="UniProtKB-KW"/>
</dbReference>
<dbReference type="CDD" id="cd17748">
    <property type="entry name" value="BRCT_DNA_ligase_like"/>
    <property type="match status" value="1"/>
</dbReference>
<dbReference type="CDD" id="cd00114">
    <property type="entry name" value="LIGANc"/>
    <property type="match status" value="1"/>
</dbReference>
<dbReference type="FunFam" id="1.10.150.20:FF:000007">
    <property type="entry name" value="DNA ligase"/>
    <property type="match status" value="1"/>
</dbReference>
<dbReference type="FunFam" id="2.40.50.140:FF:000012">
    <property type="entry name" value="DNA ligase"/>
    <property type="match status" value="1"/>
</dbReference>
<dbReference type="Gene3D" id="6.20.10.30">
    <property type="match status" value="1"/>
</dbReference>
<dbReference type="Gene3D" id="1.10.150.20">
    <property type="entry name" value="5' to 3' exonuclease, C-terminal subdomain"/>
    <property type="match status" value="2"/>
</dbReference>
<dbReference type="Gene3D" id="3.40.50.10190">
    <property type="entry name" value="BRCT domain"/>
    <property type="match status" value="1"/>
</dbReference>
<dbReference type="Gene3D" id="3.30.470.30">
    <property type="entry name" value="DNA ligase/mRNA capping enzyme"/>
    <property type="match status" value="1"/>
</dbReference>
<dbReference type="Gene3D" id="1.10.287.610">
    <property type="entry name" value="Helix hairpin bin"/>
    <property type="match status" value="1"/>
</dbReference>
<dbReference type="Gene3D" id="2.40.50.140">
    <property type="entry name" value="Nucleic acid-binding proteins"/>
    <property type="match status" value="1"/>
</dbReference>
<dbReference type="HAMAP" id="MF_01588">
    <property type="entry name" value="DNA_ligase_A"/>
    <property type="match status" value="1"/>
</dbReference>
<dbReference type="InterPro" id="IPR001357">
    <property type="entry name" value="BRCT_dom"/>
</dbReference>
<dbReference type="InterPro" id="IPR036420">
    <property type="entry name" value="BRCT_dom_sf"/>
</dbReference>
<dbReference type="InterPro" id="IPR041663">
    <property type="entry name" value="DisA/LigA_HHH"/>
</dbReference>
<dbReference type="InterPro" id="IPR001679">
    <property type="entry name" value="DNA_ligase"/>
</dbReference>
<dbReference type="InterPro" id="IPR018239">
    <property type="entry name" value="DNA_ligase_AS"/>
</dbReference>
<dbReference type="InterPro" id="IPR033136">
    <property type="entry name" value="DNA_ligase_CS"/>
</dbReference>
<dbReference type="InterPro" id="IPR013839">
    <property type="entry name" value="DNAligase_adenylation"/>
</dbReference>
<dbReference type="InterPro" id="IPR013840">
    <property type="entry name" value="DNAligase_N"/>
</dbReference>
<dbReference type="InterPro" id="IPR003583">
    <property type="entry name" value="Hlx-hairpin-Hlx_DNA-bd_motif"/>
</dbReference>
<dbReference type="InterPro" id="IPR012340">
    <property type="entry name" value="NA-bd_OB-fold"/>
</dbReference>
<dbReference type="InterPro" id="IPR004150">
    <property type="entry name" value="NAD_DNA_ligase_OB"/>
</dbReference>
<dbReference type="InterPro" id="IPR010994">
    <property type="entry name" value="RuvA_2-like"/>
</dbReference>
<dbReference type="InterPro" id="IPR004149">
    <property type="entry name" value="Znf_DNAligase_C4"/>
</dbReference>
<dbReference type="NCBIfam" id="TIGR00575">
    <property type="entry name" value="dnlj"/>
    <property type="match status" value="1"/>
</dbReference>
<dbReference type="NCBIfam" id="NF005932">
    <property type="entry name" value="PRK07956.1"/>
    <property type="match status" value="1"/>
</dbReference>
<dbReference type="PANTHER" id="PTHR23389">
    <property type="entry name" value="CHROMOSOME TRANSMISSION FIDELITY FACTOR 18"/>
    <property type="match status" value="1"/>
</dbReference>
<dbReference type="PANTHER" id="PTHR23389:SF6">
    <property type="entry name" value="REPLICATION FACTOR C SUBUNIT 1"/>
    <property type="match status" value="1"/>
</dbReference>
<dbReference type="Pfam" id="PF00533">
    <property type="entry name" value="BRCT"/>
    <property type="match status" value="1"/>
</dbReference>
<dbReference type="Pfam" id="PF01653">
    <property type="entry name" value="DNA_ligase_aden"/>
    <property type="match status" value="2"/>
</dbReference>
<dbReference type="Pfam" id="PF03120">
    <property type="entry name" value="DNA_ligase_OB"/>
    <property type="match status" value="1"/>
</dbReference>
<dbReference type="Pfam" id="PF03119">
    <property type="entry name" value="DNA_ligase_ZBD"/>
    <property type="match status" value="1"/>
</dbReference>
<dbReference type="Pfam" id="PF12826">
    <property type="entry name" value="HHH_2"/>
    <property type="match status" value="1"/>
</dbReference>
<dbReference type="Pfam" id="PF14520">
    <property type="entry name" value="HHH_5"/>
    <property type="match status" value="1"/>
</dbReference>
<dbReference type="Pfam" id="PF22745">
    <property type="entry name" value="Nlig-Ia"/>
    <property type="match status" value="1"/>
</dbReference>
<dbReference type="PIRSF" id="PIRSF001604">
    <property type="entry name" value="LigA"/>
    <property type="match status" value="1"/>
</dbReference>
<dbReference type="SMART" id="SM00292">
    <property type="entry name" value="BRCT"/>
    <property type="match status" value="1"/>
</dbReference>
<dbReference type="SMART" id="SM00278">
    <property type="entry name" value="HhH1"/>
    <property type="match status" value="3"/>
</dbReference>
<dbReference type="SMART" id="SM00532">
    <property type="entry name" value="LIGANc"/>
    <property type="match status" value="1"/>
</dbReference>
<dbReference type="SUPFAM" id="SSF52113">
    <property type="entry name" value="BRCT domain"/>
    <property type="match status" value="1"/>
</dbReference>
<dbReference type="SUPFAM" id="SSF56091">
    <property type="entry name" value="DNA ligase/mRNA capping enzyme, catalytic domain"/>
    <property type="match status" value="1"/>
</dbReference>
<dbReference type="SUPFAM" id="SSF50249">
    <property type="entry name" value="Nucleic acid-binding proteins"/>
    <property type="match status" value="1"/>
</dbReference>
<dbReference type="SUPFAM" id="SSF47781">
    <property type="entry name" value="RuvA domain 2-like"/>
    <property type="match status" value="1"/>
</dbReference>
<dbReference type="PROSITE" id="PS50172">
    <property type="entry name" value="BRCT"/>
    <property type="match status" value="1"/>
</dbReference>
<dbReference type="PROSITE" id="PS01055">
    <property type="entry name" value="DNA_LIGASE_N1"/>
    <property type="match status" value="1"/>
</dbReference>
<dbReference type="PROSITE" id="PS01056">
    <property type="entry name" value="DNA_LIGASE_N2"/>
    <property type="match status" value="1"/>
</dbReference>
<comment type="function">
    <text evidence="1">DNA ligase that catalyzes the formation of phosphodiester linkages between 5'-phosphoryl and 3'-hydroxyl groups in double-stranded DNA using NAD as a coenzyme and as the energy source for the reaction. It is essential for DNA replication and repair of damaged DNA.</text>
</comment>
<comment type="catalytic activity">
    <reaction evidence="1">
        <text>NAD(+) + (deoxyribonucleotide)n-3'-hydroxyl + 5'-phospho-(deoxyribonucleotide)m = (deoxyribonucleotide)n+m + AMP + beta-nicotinamide D-nucleotide.</text>
        <dbReference type="EC" id="6.5.1.2"/>
    </reaction>
</comment>
<comment type="cofactor">
    <cofactor evidence="1">
        <name>Mg(2+)</name>
        <dbReference type="ChEBI" id="CHEBI:18420"/>
    </cofactor>
    <cofactor evidence="1">
        <name>Mn(2+)</name>
        <dbReference type="ChEBI" id="CHEBI:29035"/>
    </cofactor>
</comment>
<comment type="similarity">
    <text evidence="1">Belongs to the NAD-dependent DNA ligase family. LigA subfamily.</text>
</comment>
<reference key="1">
    <citation type="journal article" date="2015" name="Proc. Natl. Acad. Sci. U.S.A.">
        <title>Trichodesmium genome maintains abundant, widespread noncoding DNA in situ, despite oligotrophic lifestyle.</title>
        <authorList>
            <person name="Walworth N."/>
            <person name="Pfreundt U."/>
            <person name="Nelson W.C."/>
            <person name="Mincer T."/>
            <person name="Heidelberg J.F."/>
            <person name="Fu F."/>
            <person name="Waterbury J.B."/>
            <person name="Glavina del Rio T."/>
            <person name="Goodwin L."/>
            <person name="Kyrpides N.C."/>
            <person name="Land M.L."/>
            <person name="Woyke T."/>
            <person name="Hutchins D.A."/>
            <person name="Hess W.R."/>
            <person name="Webb E.A."/>
        </authorList>
    </citation>
    <scope>NUCLEOTIDE SEQUENCE [LARGE SCALE GENOMIC DNA]</scope>
    <source>
        <strain>IMS101</strain>
    </source>
</reference>
<organism>
    <name type="scientific">Trichodesmium erythraeum (strain IMS101)</name>
    <dbReference type="NCBI Taxonomy" id="203124"/>
    <lineage>
        <taxon>Bacteria</taxon>
        <taxon>Bacillati</taxon>
        <taxon>Cyanobacteriota</taxon>
        <taxon>Cyanophyceae</taxon>
        <taxon>Oscillatoriophycideae</taxon>
        <taxon>Oscillatoriales</taxon>
        <taxon>Microcoleaceae</taxon>
        <taxon>Trichodesmium</taxon>
    </lineage>
</organism>
<feature type="chain" id="PRO_0000313498" description="DNA ligase">
    <location>
        <begin position="1"/>
        <end position="774"/>
    </location>
</feature>
<feature type="domain" description="BRCT" evidence="1">
    <location>
        <begin position="693"/>
        <end position="774"/>
    </location>
</feature>
<feature type="active site" description="N6-AMP-lysine intermediate" evidence="1">
    <location>
        <position position="163"/>
    </location>
</feature>
<feature type="binding site" evidence="1">
    <location>
        <begin position="36"/>
        <end position="40"/>
    </location>
    <ligand>
        <name>NAD(+)</name>
        <dbReference type="ChEBI" id="CHEBI:57540"/>
    </ligand>
</feature>
<feature type="binding site" evidence="1">
    <location>
        <begin position="85"/>
        <end position="86"/>
    </location>
    <ligand>
        <name>NAD(+)</name>
        <dbReference type="ChEBI" id="CHEBI:57540"/>
    </ligand>
</feature>
<feature type="binding site" evidence="1">
    <location>
        <position position="161"/>
    </location>
    <ligand>
        <name>NAD(+)</name>
        <dbReference type="ChEBI" id="CHEBI:57540"/>
    </ligand>
</feature>
<feature type="binding site" evidence="1">
    <location>
        <position position="184"/>
    </location>
    <ligand>
        <name>NAD(+)</name>
        <dbReference type="ChEBI" id="CHEBI:57540"/>
    </ligand>
</feature>
<feature type="binding site" evidence="1">
    <location>
        <position position="221"/>
    </location>
    <ligand>
        <name>NAD(+)</name>
        <dbReference type="ChEBI" id="CHEBI:57540"/>
    </ligand>
</feature>
<feature type="binding site" evidence="1">
    <location>
        <position position="341"/>
    </location>
    <ligand>
        <name>NAD(+)</name>
        <dbReference type="ChEBI" id="CHEBI:57540"/>
    </ligand>
</feature>
<feature type="binding site" evidence="1">
    <location>
        <position position="365"/>
    </location>
    <ligand>
        <name>NAD(+)</name>
        <dbReference type="ChEBI" id="CHEBI:57540"/>
    </ligand>
</feature>
<feature type="binding site" evidence="1">
    <location>
        <position position="459"/>
    </location>
    <ligand>
        <name>Zn(2+)</name>
        <dbReference type="ChEBI" id="CHEBI:29105"/>
    </ligand>
</feature>
<feature type="binding site" evidence="1">
    <location>
        <position position="462"/>
    </location>
    <ligand>
        <name>Zn(2+)</name>
        <dbReference type="ChEBI" id="CHEBI:29105"/>
    </ligand>
</feature>
<feature type="binding site" evidence="1">
    <location>
        <position position="477"/>
    </location>
    <ligand>
        <name>Zn(2+)</name>
        <dbReference type="ChEBI" id="CHEBI:29105"/>
    </ligand>
</feature>
<feature type="binding site" evidence="1">
    <location>
        <position position="482"/>
    </location>
    <ligand>
        <name>Zn(2+)</name>
        <dbReference type="ChEBI" id="CHEBI:29105"/>
    </ligand>
</feature>
<gene>
    <name evidence="1" type="primary">ligA</name>
    <name type="ordered locus">Tery_2316</name>
</gene>
<proteinExistence type="inferred from homology"/>
<name>DNLJ_TRIEI</name>